<feature type="chain" id="PRO_1000137322" description="Redox-sensing transcriptional repressor Rex">
    <location>
        <begin position="1"/>
        <end position="210"/>
    </location>
</feature>
<feature type="DNA-binding region" description="H-T-H motif" evidence="1">
    <location>
        <begin position="17"/>
        <end position="56"/>
    </location>
</feature>
<feature type="binding site" evidence="1">
    <location>
        <begin position="91"/>
        <end position="96"/>
    </location>
    <ligand>
        <name>NAD(+)</name>
        <dbReference type="ChEBI" id="CHEBI:57540"/>
    </ligand>
</feature>
<accession>B2TIV9</accession>
<proteinExistence type="inferred from homology"/>
<name>REX_CLOBB</name>
<organism>
    <name type="scientific">Clostridium botulinum (strain Eklund 17B / Type B)</name>
    <dbReference type="NCBI Taxonomy" id="935198"/>
    <lineage>
        <taxon>Bacteria</taxon>
        <taxon>Bacillati</taxon>
        <taxon>Bacillota</taxon>
        <taxon>Clostridia</taxon>
        <taxon>Eubacteriales</taxon>
        <taxon>Clostridiaceae</taxon>
        <taxon>Clostridium</taxon>
    </lineage>
</organism>
<dbReference type="EMBL" id="CP001056">
    <property type="protein sequence ID" value="ACD24745.1"/>
    <property type="molecule type" value="Genomic_DNA"/>
</dbReference>
<dbReference type="SMR" id="B2TIV9"/>
<dbReference type="KEGG" id="cbk:CLL_A0372"/>
<dbReference type="PATRIC" id="fig|935198.13.peg.348"/>
<dbReference type="HOGENOM" id="CLU_061534_1_0_9"/>
<dbReference type="Proteomes" id="UP000001195">
    <property type="component" value="Chromosome"/>
</dbReference>
<dbReference type="GO" id="GO:0005737">
    <property type="term" value="C:cytoplasm"/>
    <property type="evidence" value="ECO:0007669"/>
    <property type="project" value="UniProtKB-SubCell"/>
</dbReference>
<dbReference type="GO" id="GO:0003677">
    <property type="term" value="F:DNA binding"/>
    <property type="evidence" value="ECO:0007669"/>
    <property type="project" value="UniProtKB-UniRule"/>
</dbReference>
<dbReference type="GO" id="GO:0003700">
    <property type="term" value="F:DNA-binding transcription factor activity"/>
    <property type="evidence" value="ECO:0007669"/>
    <property type="project" value="UniProtKB-UniRule"/>
</dbReference>
<dbReference type="GO" id="GO:0045892">
    <property type="term" value="P:negative regulation of DNA-templated transcription"/>
    <property type="evidence" value="ECO:0007669"/>
    <property type="project" value="InterPro"/>
</dbReference>
<dbReference type="GO" id="GO:0051775">
    <property type="term" value="P:response to redox state"/>
    <property type="evidence" value="ECO:0007669"/>
    <property type="project" value="InterPro"/>
</dbReference>
<dbReference type="Gene3D" id="3.40.50.720">
    <property type="entry name" value="NAD(P)-binding Rossmann-like Domain"/>
    <property type="match status" value="1"/>
</dbReference>
<dbReference type="Gene3D" id="1.10.10.10">
    <property type="entry name" value="Winged helix-like DNA-binding domain superfamily/Winged helix DNA-binding domain"/>
    <property type="match status" value="1"/>
</dbReference>
<dbReference type="HAMAP" id="MF_01131">
    <property type="entry name" value="Rex"/>
    <property type="match status" value="1"/>
</dbReference>
<dbReference type="InterPro" id="IPR003781">
    <property type="entry name" value="CoA-bd"/>
</dbReference>
<dbReference type="InterPro" id="IPR036291">
    <property type="entry name" value="NAD(P)-bd_dom_sf"/>
</dbReference>
<dbReference type="InterPro" id="IPR009718">
    <property type="entry name" value="Rex_DNA-bd_C_dom"/>
</dbReference>
<dbReference type="InterPro" id="IPR022876">
    <property type="entry name" value="Tscrpt_rep_Rex"/>
</dbReference>
<dbReference type="InterPro" id="IPR036388">
    <property type="entry name" value="WH-like_DNA-bd_sf"/>
</dbReference>
<dbReference type="InterPro" id="IPR036390">
    <property type="entry name" value="WH_DNA-bd_sf"/>
</dbReference>
<dbReference type="NCBIfam" id="NF003989">
    <property type="entry name" value="PRK05472.1-3"/>
    <property type="match status" value="1"/>
</dbReference>
<dbReference type="NCBIfam" id="NF003990">
    <property type="entry name" value="PRK05472.1-4"/>
    <property type="match status" value="1"/>
</dbReference>
<dbReference type="NCBIfam" id="NF003993">
    <property type="entry name" value="PRK05472.2-2"/>
    <property type="match status" value="1"/>
</dbReference>
<dbReference type="NCBIfam" id="NF003994">
    <property type="entry name" value="PRK05472.2-3"/>
    <property type="match status" value="1"/>
</dbReference>
<dbReference type="NCBIfam" id="NF003995">
    <property type="entry name" value="PRK05472.2-4"/>
    <property type="match status" value="1"/>
</dbReference>
<dbReference type="NCBIfam" id="NF003996">
    <property type="entry name" value="PRK05472.2-5"/>
    <property type="match status" value="1"/>
</dbReference>
<dbReference type="PANTHER" id="PTHR35786">
    <property type="entry name" value="REDOX-SENSING TRANSCRIPTIONAL REPRESSOR REX"/>
    <property type="match status" value="1"/>
</dbReference>
<dbReference type="PANTHER" id="PTHR35786:SF1">
    <property type="entry name" value="REDOX-SENSING TRANSCRIPTIONAL REPRESSOR REX 1"/>
    <property type="match status" value="1"/>
</dbReference>
<dbReference type="Pfam" id="PF02629">
    <property type="entry name" value="CoA_binding"/>
    <property type="match status" value="1"/>
</dbReference>
<dbReference type="Pfam" id="PF06971">
    <property type="entry name" value="Put_DNA-bind_N"/>
    <property type="match status" value="1"/>
</dbReference>
<dbReference type="SMART" id="SM00881">
    <property type="entry name" value="CoA_binding"/>
    <property type="match status" value="1"/>
</dbReference>
<dbReference type="SUPFAM" id="SSF51735">
    <property type="entry name" value="NAD(P)-binding Rossmann-fold domains"/>
    <property type="match status" value="1"/>
</dbReference>
<dbReference type="SUPFAM" id="SSF46785">
    <property type="entry name" value="Winged helix' DNA-binding domain"/>
    <property type="match status" value="1"/>
</dbReference>
<gene>
    <name evidence="1" type="primary">rex</name>
    <name type="ordered locus">CLL_A0372</name>
</gene>
<protein>
    <recommendedName>
        <fullName evidence="1">Redox-sensing transcriptional repressor Rex</fullName>
    </recommendedName>
</protein>
<reference key="1">
    <citation type="submission" date="2008-04" db="EMBL/GenBank/DDBJ databases">
        <title>Complete sequence of Clostridium botulinum strain Eklund.</title>
        <authorList>
            <person name="Brinkac L.M."/>
            <person name="Brown J.L."/>
            <person name="Bruce D."/>
            <person name="Detter C."/>
            <person name="Munk C."/>
            <person name="Smith L.A."/>
            <person name="Smith T.J."/>
            <person name="Sutton G."/>
            <person name="Brettin T.S."/>
        </authorList>
    </citation>
    <scope>NUCLEOTIDE SEQUENCE [LARGE SCALE GENOMIC DNA]</scope>
    <source>
        <strain>Eklund 17B / Type B</strain>
    </source>
</reference>
<keyword id="KW-0963">Cytoplasm</keyword>
<keyword id="KW-0238">DNA-binding</keyword>
<keyword id="KW-0520">NAD</keyword>
<keyword id="KW-0678">Repressor</keyword>
<keyword id="KW-0804">Transcription</keyword>
<keyword id="KW-0805">Transcription regulation</keyword>
<evidence type="ECO:0000255" key="1">
    <source>
        <dbReference type="HAMAP-Rule" id="MF_01131"/>
    </source>
</evidence>
<comment type="function">
    <text evidence="1">Modulates transcription in response to changes in cellular NADH/NAD(+) redox state.</text>
</comment>
<comment type="subunit">
    <text evidence="1">Homodimer.</text>
</comment>
<comment type="subcellular location">
    <subcellularLocation>
        <location evidence="1">Cytoplasm</location>
    </subcellularLocation>
</comment>
<comment type="similarity">
    <text evidence="1">Belongs to the transcriptional regulatory Rex family.</text>
</comment>
<sequence>MDKNKNISMAVIKRLPKYHRYLNELMKNDVDRISSKELGEKIGFTASQIRQDLNCFGDFGQQGYGYNVKELYTQINSILGLDKEYNAVLIGAGNIGQAIANYTRFDKLGIMITAIFDANPKLIGIKIRDIEIRDIDELGSFLKSDSVDIGVICVPKKSAQRVSDELINGGIRGIWNFAPIDLAVPKDVKVENVHLSESVSTLIYQLHQQR</sequence>